<organism>
    <name type="scientific">Brevundimonas vesicularis</name>
    <name type="common">Pseudomonas vesicularis</name>
    <dbReference type="NCBI Taxonomy" id="41276"/>
    <lineage>
        <taxon>Bacteria</taxon>
        <taxon>Pseudomonadati</taxon>
        <taxon>Pseudomonadota</taxon>
        <taxon>Alphaproteobacteria</taxon>
        <taxon>Caulobacterales</taxon>
        <taxon>Caulobacteraceae</taxon>
        <taxon>Brevundimonas</taxon>
    </lineage>
</organism>
<protein>
    <recommendedName>
        <fullName evidence="2">Malate dehydrogenase</fullName>
        <ecNumber evidence="2">1.1.1.37</ecNumber>
    </recommendedName>
</protein>
<comment type="function">
    <text evidence="2">Catalyzes the reversible oxidation of malate to oxaloacetate.</text>
</comment>
<comment type="catalytic activity">
    <reaction evidence="2">
        <text>(S)-malate + NAD(+) = oxaloacetate + NADH + H(+)</text>
        <dbReference type="Rhea" id="RHEA:21432"/>
        <dbReference type="ChEBI" id="CHEBI:15378"/>
        <dbReference type="ChEBI" id="CHEBI:15589"/>
        <dbReference type="ChEBI" id="CHEBI:16452"/>
        <dbReference type="ChEBI" id="CHEBI:57540"/>
        <dbReference type="ChEBI" id="CHEBI:57945"/>
        <dbReference type="EC" id="1.1.1.37"/>
    </reaction>
</comment>
<comment type="similarity">
    <text evidence="3">Belongs to the LDH/MDH superfamily. MDH type 3 family.</text>
</comment>
<keyword id="KW-0903">Direct protein sequencing</keyword>
<keyword id="KW-0520">NAD</keyword>
<keyword id="KW-0560">Oxidoreductase</keyword>
<keyword id="KW-0816">Tricarboxylic acid cycle</keyword>
<sequence length="19" mass="1710">AXAKIALIGAGMIGGTLAA</sequence>
<proteinExistence type="evidence at protein level"/>
<feature type="chain" id="PRO_0000113441" description="Malate dehydrogenase">
    <location>
        <begin position="1"/>
        <end position="19" status="greater than"/>
    </location>
</feature>
<feature type="binding site" evidence="1">
    <location>
        <begin position="9"/>
        <end position="14"/>
    </location>
    <ligand>
        <name>NAD(+)</name>
        <dbReference type="ChEBI" id="CHEBI:57540"/>
    </ligand>
</feature>
<feature type="non-terminal residue">
    <location>
        <position position="19"/>
    </location>
</feature>
<reference key="1">
    <citation type="journal article" date="1997" name="J. Bacteriol.">
        <title>Structural studies of malate dehydrogenases (MDHs): MDHs in Brevundimonas species are the first reported MDHs in Proteobacteria which resemble lactate dehydrogenases in primary structure.</title>
        <authorList>
            <person name="Charnock C."/>
        </authorList>
    </citation>
    <scope>PROTEIN SEQUENCE</scope>
    <source>
        <strain>ATCC 11426 / DSM 7226 / JCM 1477 / LMG 2350 / NBRC 12165 / NCIMB 1945 / NCTC 10900</strain>
    </source>
</reference>
<gene>
    <name type="primary">mdh</name>
</gene>
<dbReference type="EC" id="1.1.1.37" evidence="2"/>
<dbReference type="GO" id="GO:0030060">
    <property type="term" value="F:L-malate dehydrogenase (NAD+) activity"/>
    <property type="evidence" value="ECO:0007669"/>
    <property type="project" value="UniProtKB-EC"/>
</dbReference>
<dbReference type="GO" id="GO:0006099">
    <property type="term" value="P:tricarboxylic acid cycle"/>
    <property type="evidence" value="ECO:0007669"/>
    <property type="project" value="UniProtKB-KW"/>
</dbReference>
<name>MDH_BREVE</name>
<evidence type="ECO:0000250" key="1">
    <source>
        <dbReference type="UniProtKB" id="P80040"/>
    </source>
</evidence>
<evidence type="ECO:0000250" key="2">
    <source>
        <dbReference type="UniProtKB" id="Q25QU7"/>
    </source>
</evidence>
<evidence type="ECO:0000305" key="3"/>
<accession>P80543</accession>